<comment type="function">
    <text evidence="1 2">Catalyzes alpha(1-&gt;3) linkage of fucosyl moiety transferred from GDP-beta-L-fucose to N-acetyl glucosamine (GlcNAc) within type 2 lactosamine (LacNAc, Gal-beta(1-&gt;4)GlcNAc) glycan attached to N- or O-linked glycoproteins. Robustly fucosylates nonsialylated distal LacNAc unit of the polylactosamine chain to form Lewis X antigen (CD15), a glycan determinant known to mediate important cellular functions in development and immunity. Fucosylates with lower efficiency sialylated LacNAc acceptors to form sialyl Lewis X and 6-sulfo sialyl Lewis X determinants that serve as recognition epitopes for C-type lectins. Together with FUT7 contributes to SELE, SELL and SELP selectin ligand biosynthesis and selectin-dependent lymphocyte homing, leukocyte migration and blood leukocyte homeostasis (By similarity). In a cell type specific manner, may also fucosylate the internal LacNAc unit of the polylactosamine chain to form VIM-2 antigen that serves as recognition epitope for SELE (By similarity).</text>
</comment>
<comment type="catalytic activity">
    <reaction evidence="2">
        <text>a beta-D-galactosyl-(1-&gt;4)-N-acetyl-beta-D-glucosaminyl derivative + GDP-beta-L-fucose = a beta-D-galactosyl-(1-&gt;4)-[alpha-L-fucosyl-(1-&gt;3)]-N-acetyl-beta-D-glucosaminyl derivative + GDP + H(+)</text>
        <dbReference type="Rhea" id="RHEA:14257"/>
        <dbReference type="ChEBI" id="CHEBI:15378"/>
        <dbReference type="ChEBI" id="CHEBI:57273"/>
        <dbReference type="ChEBI" id="CHEBI:58189"/>
        <dbReference type="ChEBI" id="CHEBI:133507"/>
        <dbReference type="ChEBI" id="CHEBI:137941"/>
        <dbReference type="EC" id="2.4.1.152"/>
    </reaction>
    <physiologicalReaction direction="left-to-right" evidence="2">
        <dbReference type="Rhea" id="RHEA:14258"/>
    </physiologicalReaction>
</comment>
<comment type="catalytic activity">
    <reaction evidence="2">
        <text>an N-acetyl-alpha-neuraminyl-(2-&gt;3)-beta-D-galactosyl-(1-&gt;4)-N-acetyl-beta-D-glucosaminyl derivative + GDP-beta-L-fucose = an alpha-Neu5Ac-(2-&gt;3)-beta-D-Gal-(1-&gt;4)-[alpha-L-Fuc-(1-&gt;3)]-beta-D-GlcNAc derivative + GDP + H(+)</text>
        <dbReference type="Rhea" id="RHEA:56076"/>
        <dbReference type="ChEBI" id="CHEBI:15378"/>
        <dbReference type="ChEBI" id="CHEBI:57273"/>
        <dbReference type="ChEBI" id="CHEBI:58189"/>
        <dbReference type="ChEBI" id="CHEBI:136545"/>
        <dbReference type="ChEBI" id="CHEBI:139509"/>
    </reaction>
    <physiologicalReaction direction="left-to-right" evidence="2">
        <dbReference type="Rhea" id="RHEA:56077"/>
    </physiologicalReaction>
</comment>
<comment type="catalytic activity">
    <reaction evidence="1">
        <text>an alpha-Neu5Ac-(2-&gt;3)-beta-D-Gal-(1-&gt;4)-beta-D-GlcNAc-(1-&gt;3)-beta-D-Gal-(1-&gt;4)-beta-D-GlcNAc derivative + GDP-beta-L-fucose = an alpha-Neu5Ac-(2-&gt;3)-beta-D-Gal-(1-&gt;4)-beta-D-GlcNAc-(1-&gt;3)-beta-D-Gal-(1-&gt;4)-[alpha-L-Fuc-(1-&gt;3)]-beta-D-GlcNAc derivative + GDP + H(+)</text>
        <dbReference type="Rhea" id="RHEA:68044"/>
        <dbReference type="ChEBI" id="CHEBI:15378"/>
        <dbReference type="ChEBI" id="CHEBI:57273"/>
        <dbReference type="ChEBI" id="CHEBI:58189"/>
        <dbReference type="ChEBI" id="CHEBI:145343"/>
        <dbReference type="ChEBI" id="CHEBI:176900"/>
    </reaction>
    <physiologicalReaction direction="left-to-right" evidence="1">
        <dbReference type="Rhea" id="RHEA:68045"/>
    </physiologicalReaction>
</comment>
<comment type="catalytic activity">
    <reaction evidence="2">
        <text>an alpha-Neu5Ac-(2-&gt;3)-beta-D-Gal-(1-&gt;4)-beta-D-GlcNAc6S derivative + GDP-beta-L-fucose = an alpha-Neu5Ac-(2-&gt;3)-beta-D-Gal-(1-&gt;4)-[alpha-L-Fuc-(1-&gt;3)]-beta-D-GlcNAc6S derivative + GDP + H(+)</text>
        <dbReference type="Rhea" id="RHEA:62004"/>
        <dbReference type="ChEBI" id="CHEBI:15378"/>
        <dbReference type="ChEBI" id="CHEBI:57273"/>
        <dbReference type="ChEBI" id="CHEBI:58189"/>
        <dbReference type="ChEBI" id="CHEBI:145344"/>
        <dbReference type="ChEBI" id="CHEBI:145345"/>
    </reaction>
    <physiologicalReaction direction="left-to-right" evidence="2">
        <dbReference type="Rhea" id="RHEA:62005"/>
    </physiologicalReaction>
</comment>
<comment type="pathway">
    <text evidence="2">Protein modification; protein glycosylation.</text>
</comment>
<comment type="subcellular location">
    <subcellularLocation>
        <location>Golgi apparatus</location>
        <location>Golgi stack membrane</location>
        <topology>Single-pass type II membrane protein</topology>
    </subcellularLocation>
    <text>Membrane-bound form in trans cisternae of Golgi.</text>
</comment>
<comment type="alternative products">
    <event type="alternative splicing"/>
    <isoform>
        <id>Q62994-1</id>
        <name>Long</name>
        <sequence type="displayed"/>
    </isoform>
    <isoform>
        <id>Q62994-2</id>
        <name>Short</name>
        <sequence type="described" ref="VSP_001779"/>
    </isoform>
</comment>
<comment type="tissue specificity">
    <text>In adult, highest expression in spleen, testis, brain, lung, kidney and skeletal muscle and to a lesser extent in liver and heart.</text>
</comment>
<comment type="similarity">
    <text evidence="5">Belongs to the glycosyltransferase 10 family.</text>
</comment>
<name>FUT4_RAT</name>
<reference key="1">
    <citation type="journal article" date="1997" name="Glycoconj. J.">
        <title>Cloning of a rat alpha1,3-fucosyltransferase gene: a member of the fucosyltransferase IV family.</title>
        <authorList>
            <person name="Sajdel-Sulkowska E.M."/>
            <person name="Smith F.I."/>
            <person name="Wiederschain G."/>
            <person name="McCluer R.H."/>
        </authorList>
    </citation>
    <scope>NUCLEOTIDE SEQUENCE [GENOMIC DNA] (ISOFORMS LONG AND SHORT)</scope>
    <source>
        <strain>Sprague-Dawley</strain>
        <tissue>Kidney</tissue>
    </source>
</reference>
<accession>Q62994</accession>
<dbReference type="EC" id="2.4.1.152" evidence="1 2"/>
<dbReference type="EMBL" id="U58860">
    <property type="protein sequence ID" value="AAB97609.1"/>
    <property type="molecule type" value="Genomic_DNA"/>
</dbReference>
<dbReference type="SMR" id="Q62994"/>
<dbReference type="FunCoup" id="Q62994">
    <property type="interactions" value="188"/>
</dbReference>
<dbReference type="STRING" id="10116.ENSRNOP00000012176"/>
<dbReference type="CAZy" id="GT10">
    <property type="family name" value="Glycosyltransferase Family 10"/>
</dbReference>
<dbReference type="GlyCosmos" id="Q62994">
    <property type="glycosylation" value="2 sites, No reported glycans"/>
</dbReference>
<dbReference type="GlyGen" id="Q62994">
    <property type="glycosylation" value="2 sites"/>
</dbReference>
<dbReference type="PhosphoSitePlus" id="Q62994"/>
<dbReference type="PaxDb" id="10116-ENSRNOP00000012176"/>
<dbReference type="UCSC" id="RGD:619954">
    <molecule id="Q62994-1"/>
    <property type="organism name" value="rat"/>
</dbReference>
<dbReference type="AGR" id="RGD:619954"/>
<dbReference type="RGD" id="619954">
    <property type="gene designation" value="Fut4"/>
</dbReference>
<dbReference type="eggNOG" id="KOG2619">
    <property type="taxonomic scope" value="Eukaryota"/>
</dbReference>
<dbReference type="InParanoid" id="Q62994"/>
<dbReference type="PhylomeDB" id="Q62994"/>
<dbReference type="Reactome" id="R-RNO-9037629">
    <property type="pathway name" value="Lewis blood group biosynthesis"/>
</dbReference>
<dbReference type="UniPathway" id="UPA00378"/>
<dbReference type="PRO" id="PR:Q62994"/>
<dbReference type="Proteomes" id="UP000002494">
    <property type="component" value="Unplaced"/>
</dbReference>
<dbReference type="GO" id="GO:0071944">
    <property type="term" value="C:cell periphery"/>
    <property type="evidence" value="ECO:0000266"/>
    <property type="project" value="RGD"/>
</dbReference>
<dbReference type="GO" id="GO:0009986">
    <property type="term" value="C:cell surface"/>
    <property type="evidence" value="ECO:0000266"/>
    <property type="project" value="RGD"/>
</dbReference>
<dbReference type="GO" id="GO:0032580">
    <property type="term" value="C:Golgi cisterna membrane"/>
    <property type="evidence" value="ECO:0007669"/>
    <property type="project" value="UniProtKB-SubCell"/>
</dbReference>
<dbReference type="GO" id="GO:0005802">
    <property type="term" value="C:trans-Golgi network"/>
    <property type="evidence" value="ECO:0000250"/>
    <property type="project" value="UniProtKB"/>
</dbReference>
<dbReference type="GO" id="GO:0017083">
    <property type="term" value="F:4-galactosyl-N-acetylglucosaminide 3-alpha-L-fucosyltransferase activity"/>
    <property type="evidence" value="ECO:0000250"/>
    <property type="project" value="UniProtKB"/>
</dbReference>
<dbReference type="GO" id="GO:0046920">
    <property type="term" value="F:alpha-(1-&gt;3)-fucosyltransferase activity"/>
    <property type="evidence" value="ECO:0000314"/>
    <property type="project" value="RGD"/>
</dbReference>
<dbReference type="GO" id="GO:0036065">
    <property type="term" value="P:fucosylation"/>
    <property type="evidence" value="ECO:0000318"/>
    <property type="project" value="GO_Central"/>
</dbReference>
<dbReference type="GO" id="GO:0006688">
    <property type="term" value="P:glycosphingolipid biosynthetic process"/>
    <property type="evidence" value="ECO:0000250"/>
    <property type="project" value="UniProtKB"/>
</dbReference>
<dbReference type="GO" id="GO:0006954">
    <property type="term" value="P:inflammatory response"/>
    <property type="evidence" value="ECO:0007669"/>
    <property type="project" value="UniProtKB-KW"/>
</dbReference>
<dbReference type="GO" id="GO:0106402">
    <property type="term" value="P:Lewis x epitope biosynthetic process"/>
    <property type="evidence" value="ECO:0000250"/>
    <property type="project" value="UniProtKB"/>
</dbReference>
<dbReference type="GO" id="GO:0097022">
    <property type="term" value="P:lymphocyte migration into lymph node"/>
    <property type="evidence" value="ECO:0000250"/>
    <property type="project" value="UniProtKB"/>
</dbReference>
<dbReference type="GO" id="GO:0009311">
    <property type="term" value="P:oligosaccharide metabolic process"/>
    <property type="evidence" value="ECO:0000250"/>
    <property type="project" value="UniProtKB"/>
</dbReference>
<dbReference type="GO" id="GO:1903238">
    <property type="term" value="P:positive regulation of leukocyte tethering or rolling"/>
    <property type="evidence" value="ECO:0000250"/>
    <property type="project" value="UniProtKB"/>
</dbReference>
<dbReference type="GO" id="GO:1902624">
    <property type="term" value="P:positive regulation of neutrophil migration"/>
    <property type="evidence" value="ECO:0000250"/>
    <property type="project" value="UniProtKB"/>
</dbReference>
<dbReference type="GO" id="GO:0006487">
    <property type="term" value="P:protein N-linked glycosylation"/>
    <property type="evidence" value="ECO:0000250"/>
    <property type="project" value="UniProtKB"/>
</dbReference>
<dbReference type="GO" id="GO:0006493">
    <property type="term" value="P:protein O-linked glycosylation"/>
    <property type="evidence" value="ECO:0000250"/>
    <property type="project" value="UniProtKB"/>
</dbReference>
<dbReference type="GO" id="GO:1903037">
    <property type="term" value="P:regulation of leukocyte cell-cell adhesion"/>
    <property type="evidence" value="ECO:0000250"/>
    <property type="project" value="UniProtKB"/>
</dbReference>
<dbReference type="FunFam" id="3.40.50.11660:FF:000001">
    <property type="entry name" value="alpha-(1,3)-fucosyltransferase 9"/>
    <property type="match status" value="1"/>
</dbReference>
<dbReference type="Gene3D" id="3.40.50.11660">
    <property type="entry name" value="Glycosyl transferase family 10, C-terminal domain"/>
    <property type="match status" value="1"/>
</dbReference>
<dbReference type="InterPro" id="IPR055270">
    <property type="entry name" value="Glyco_tran_10_C"/>
</dbReference>
<dbReference type="InterPro" id="IPR031481">
    <property type="entry name" value="Glyco_tran_10_N"/>
</dbReference>
<dbReference type="InterPro" id="IPR001503">
    <property type="entry name" value="Glyco_trans_10"/>
</dbReference>
<dbReference type="InterPro" id="IPR038577">
    <property type="entry name" value="GT10-like_C_sf"/>
</dbReference>
<dbReference type="PANTHER" id="PTHR11929">
    <property type="entry name" value="ALPHA- 1,3 -FUCOSYLTRANSFERASE"/>
    <property type="match status" value="1"/>
</dbReference>
<dbReference type="PANTHER" id="PTHR11929:SF132">
    <property type="entry name" value="ALPHA-(1,3)-FUCOSYLTRANSFERASE 4"/>
    <property type="match status" value="1"/>
</dbReference>
<dbReference type="Pfam" id="PF17039">
    <property type="entry name" value="Glyco_tran_10_N"/>
    <property type="match status" value="1"/>
</dbReference>
<dbReference type="Pfam" id="PF00852">
    <property type="entry name" value="Glyco_transf_10"/>
    <property type="match status" value="1"/>
</dbReference>
<dbReference type="SUPFAM" id="SSF53756">
    <property type="entry name" value="UDP-Glycosyltransferase/glycogen phosphorylase"/>
    <property type="match status" value="1"/>
</dbReference>
<gene>
    <name type="primary">Fut4</name>
    <name type="synonym">Rfuc-t</name>
</gene>
<sequence length="433" mass="48779">MAPAGRKLQHESRCRPSRPVDAWRAAATTRGRCMGTPGARRTARRGGWGLPRTSSGLAAAGLLCTALTACLCWGQLPPLPWASPAPQRPVSVLLWWEPFGGRGGHSKPPPDCSLRFNISGCRLLTDRAAYGEAQAVLFHHRDLVKGPPDWPPPWGAQERTDEALELRVFDDQEGAVMLAREALETTGSRPPGQRWVWMNFESPSHTPGLRGLAKDLFNWTLSYRTDSDIFVPYGFLYPRSHPAEQPSGLGPPLARKRGLVAWVVSHWNERQARVRYYHQLRRHVSVDVFGRAGPGQPVPAVGLLHTVARYKFYLAFENSQHVDYNTEKLWRNAFLAGAVPVLLGPDRANYEGFVPRGSFIHVDDFPSAASLAAYLLFLDRNVAVYRRYFHWRRSYAVHITSFWDEPWCQTCRAVQTSGDQPKSIHNLADWFQR</sequence>
<evidence type="ECO:0000250" key="1">
    <source>
        <dbReference type="UniProtKB" id="P22083"/>
    </source>
</evidence>
<evidence type="ECO:0000250" key="2">
    <source>
        <dbReference type="UniProtKB" id="Q11127"/>
    </source>
</evidence>
<evidence type="ECO:0000255" key="3"/>
<evidence type="ECO:0000256" key="4">
    <source>
        <dbReference type="SAM" id="MobiDB-lite"/>
    </source>
</evidence>
<evidence type="ECO:0000305" key="5"/>
<protein>
    <recommendedName>
        <fullName>Alpha-(1,3)-fucosyltransferase 4</fullName>
    </recommendedName>
    <alternativeName>
        <fullName>4-galactosyl-N-acetylglucosaminide 3-alpha-L-fucosyltransferase</fullName>
        <ecNumber evidence="1 2">2.4.1.152</ecNumber>
    </alternativeName>
    <alternativeName>
        <fullName>Fucosyltransferase 4</fullName>
    </alternativeName>
    <alternativeName>
        <fullName>Fucosyltransferase IV</fullName>
        <shortName>Fuc-TIV</shortName>
        <shortName>FucT-IV</shortName>
    </alternativeName>
    <alternativeName>
        <fullName>Galactoside 3-L-fucosyltransferase</fullName>
    </alternativeName>
</protein>
<feature type="chain" id="PRO_0000221103" description="Alpha-(1,3)-fucosyltransferase 4">
    <location>
        <begin position="1"/>
        <end position="433"/>
    </location>
</feature>
<feature type="topological domain" description="Cytoplasmic" evidence="3">
    <location>
        <begin position="1"/>
        <end position="54"/>
    </location>
</feature>
<feature type="transmembrane region" description="Helical; Signal-anchor for type II membrane protein" evidence="3">
    <location>
        <begin position="55"/>
        <end position="74"/>
    </location>
</feature>
<feature type="topological domain" description="Lumenal" evidence="3">
    <location>
        <begin position="75"/>
        <end position="433"/>
    </location>
</feature>
<feature type="region of interest" description="Disordered" evidence="4">
    <location>
        <begin position="1"/>
        <end position="20"/>
    </location>
</feature>
<feature type="glycosylation site" description="N-linked (GlcNAc...) asparagine" evidence="3">
    <location>
        <position position="117"/>
    </location>
</feature>
<feature type="glycosylation site" description="N-linked (GlcNAc...) asparagine" evidence="3">
    <location>
        <position position="218"/>
    </location>
</feature>
<feature type="splice variant" id="VSP_001779" description="In isoform Short." evidence="5">
    <location>
        <begin position="1"/>
        <end position="33"/>
    </location>
</feature>
<proteinExistence type="evidence at transcript level"/>
<organism>
    <name type="scientific">Rattus norvegicus</name>
    <name type="common">Rat</name>
    <dbReference type="NCBI Taxonomy" id="10116"/>
    <lineage>
        <taxon>Eukaryota</taxon>
        <taxon>Metazoa</taxon>
        <taxon>Chordata</taxon>
        <taxon>Craniata</taxon>
        <taxon>Vertebrata</taxon>
        <taxon>Euteleostomi</taxon>
        <taxon>Mammalia</taxon>
        <taxon>Eutheria</taxon>
        <taxon>Euarchontoglires</taxon>
        <taxon>Glires</taxon>
        <taxon>Rodentia</taxon>
        <taxon>Myomorpha</taxon>
        <taxon>Muroidea</taxon>
        <taxon>Muridae</taxon>
        <taxon>Murinae</taxon>
        <taxon>Rattus</taxon>
    </lineage>
</organism>
<keyword id="KW-0025">Alternative splicing</keyword>
<keyword id="KW-0325">Glycoprotein</keyword>
<keyword id="KW-0328">Glycosyltransferase</keyword>
<keyword id="KW-0333">Golgi apparatus</keyword>
<keyword id="KW-0395">Inflammatory response</keyword>
<keyword id="KW-0472">Membrane</keyword>
<keyword id="KW-1185">Reference proteome</keyword>
<keyword id="KW-0735">Signal-anchor</keyword>
<keyword id="KW-0808">Transferase</keyword>
<keyword id="KW-0812">Transmembrane</keyword>
<keyword id="KW-1133">Transmembrane helix</keyword>